<feature type="chain" id="PRO_0000311243" description="Zinc finger CCCH domain-containing protein 18">
    <location>
        <begin position="1"/>
        <end position="948"/>
    </location>
</feature>
<feature type="zinc finger region" description="C3H1-type" evidence="5">
    <location>
        <begin position="215"/>
        <end position="241"/>
    </location>
</feature>
<feature type="region of interest" description="Disordered" evidence="6">
    <location>
        <begin position="1"/>
        <end position="219"/>
    </location>
</feature>
<feature type="region of interest" description="Disordered" evidence="6">
    <location>
        <begin position="272"/>
        <end position="296"/>
    </location>
</feature>
<feature type="region of interest" description="Disordered" evidence="6">
    <location>
        <begin position="388"/>
        <end position="922"/>
    </location>
</feature>
<feature type="coiled-coil region" evidence="4">
    <location>
        <begin position="395"/>
        <end position="460"/>
    </location>
</feature>
<feature type="coiled-coil region" evidence="4">
    <location>
        <begin position="916"/>
        <end position="945"/>
    </location>
</feature>
<feature type="compositionally biased region" description="Acidic residues" evidence="6">
    <location>
        <begin position="15"/>
        <end position="25"/>
    </location>
</feature>
<feature type="compositionally biased region" description="Basic and acidic residues" evidence="6">
    <location>
        <begin position="70"/>
        <end position="86"/>
    </location>
</feature>
<feature type="compositionally biased region" description="Acidic residues" evidence="6">
    <location>
        <begin position="95"/>
        <end position="105"/>
    </location>
</feature>
<feature type="compositionally biased region" description="Basic and acidic residues" evidence="6">
    <location>
        <begin position="106"/>
        <end position="120"/>
    </location>
</feature>
<feature type="compositionally biased region" description="Acidic residues" evidence="6">
    <location>
        <begin position="121"/>
        <end position="132"/>
    </location>
</feature>
<feature type="compositionally biased region" description="Acidic residues" evidence="6">
    <location>
        <begin position="139"/>
        <end position="154"/>
    </location>
</feature>
<feature type="compositionally biased region" description="Basic and acidic residues" evidence="6">
    <location>
        <begin position="177"/>
        <end position="186"/>
    </location>
</feature>
<feature type="compositionally biased region" description="Acidic residues" evidence="6">
    <location>
        <begin position="187"/>
        <end position="203"/>
    </location>
</feature>
<feature type="compositionally biased region" description="Basic and acidic residues" evidence="6">
    <location>
        <begin position="204"/>
        <end position="213"/>
    </location>
</feature>
<feature type="compositionally biased region" description="Basic and acidic residues" evidence="6">
    <location>
        <begin position="392"/>
        <end position="480"/>
    </location>
</feature>
<feature type="compositionally biased region" description="Basic and acidic residues" evidence="6">
    <location>
        <begin position="506"/>
        <end position="516"/>
    </location>
</feature>
<feature type="compositionally biased region" description="Low complexity" evidence="6">
    <location>
        <begin position="541"/>
        <end position="602"/>
    </location>
</feature>
<feature type="compositionally biased region" description="Pro residues" evidence="6">
    <location>
        <begin position="603"/>
        <end position="612"/>
    </location>
</feature>
<feature type="compositionally biased region" description="Basic and acidic residues" evidence="6">
    <location>
        <begin position="657"/>
        <end position="666"/>
    </location>
</feature>
<feature type="compositionally biased region" description="Low complexity" evidence="6">
    <location>
        <begin position="688"/>
        <end position="721"/>
    </location>
</feature>
<feature type="compositionally biased region" description="Low complexity" evidence="6">
    <location>
        <begin position="732"/>
        <end position="746"/>
    </location>
</feature>
<feature type="compositionally biased region" description="Basic and acidic residues" evidence="6">
    <location>
        <begin position="756"/>
        <end position="770"/>
    </location>
</feature>
<feature type="compositionally biased region" description="Low complexity" evidence="6">
    <location>
        <begin position="774"/>
        <end position="804"/>
    </location>
</feature>
<feature type="compositionally biased region" description="Basic and acidic residues" evidence="6">
    <location>
        <begin position="820"/>
        <end position="837"/>
    </location>
</feature>
<feature type="compositionally biased region" description="Polar residues" evidence="6">
    <location>
        <begin position="888"/>
        <end position="898"/>
    </location>
</feature>
<feature type="compositionally biased region" description="Low complexity" evidence="6">
    <location>
        <begin position="902"/>
        <end position="919"/>
    </location>
</feature>
<feature type="modified residue" description="N-acetylmethionine" evidence="3">
    <location>
        <position position="1"/>
    </location>
</feature>
<feature type="modified residue" description="Phosphoserine" evidence="3">
    <location>
        <position position="6"/>
    </location>
</feature>
<feature type="modified residue" description="Phosphoserine" evidence="3">
    <location>
        <position position="33"/>
    </location>
</feature>
<feature type="modified residue" description="Phosphoserine" evidence="9 12">
    <location>
        <position position="45"/>
    </location>
</feature>
<feature type="modified residue" description="Phosphoserine" evidence="2">
    <location>
        <position position="58"/>
    </location>
</feature>
<feature type="modified residue" description="Phosphoserine" evidence="3">
    <location>
        <position position="64"/>
    </location>
</feature>
<feature type="modified residue" description="Phosphoserine" evidence="3">
    <location>
        <position position="71"/>
    </location>
</feature>
<feature type="modified residue" description="Phosphoserine" evidence="3">
    <location>
        <position position="75"/>
    </location>
</feature>
<feature type="modified residue" description="Phosphoserine" evidence="3">
    <location>
        <position position="80"/>
    </location>
</feature>
<feature type="modified residue" description="Phosphoserine" evidence="9 12">
    <location>
        <position position="92"/>
    </location>
</feature>
<feature type="modified residue" description="Phosphothreonine" evidence="12">
    <location>
        <position position="105"/>
    </location>
</feature>
<feature type="modified residue" description="Phosphoserine" evidence="12">
    <location>
        <position position="106"/>
    </location>
</feature>
<feature type="modified residue" description="Phosphoserine" evidence="12">
    <location>
        <position position="114"/>
    </location>
</feature>
<feature type="modified residue" description="Phosphoserine" evidence="3">
    <location>
        <position position="169"/>
    </location>
</feature>
<feature type="modified residue" description="Phosphoserine" evidence="3">
    <location>
        <position position="483"/>
    </location>
</feature>
<feature type="modified residue" description="Phosphoserine" evidence="3">
    <location>
        <position position="528"/>
    </location>
</feature>
<feature type="modified residue" description="Phosphoserine" evidence="9 10 11 12">
    <location>
        <position position="530"/>
    </location>
</feature>
<feature type="modified residue" description="Phosphoserine" evidence="3">
    <location>
        <position position="532"/>
    </location>
</feature>
<feature type="modified residue" description="N6-acetyllysine" evidence="13">
    <location>
        <position position="810"/>
    </location>
</feature>
<feature type="modified residue" description="Phosphoserine" evidence="3">
    <location>
        <position position="838"/>
    </location>
</feature>
<feature type="modified residue" description="Phosphoserine" evidence="11">
    <location>
        <position position="847"/>
    </location>
</feature>
<feature type="modified residue" description="Phosphoserine" evidence="11">
    <location>
        <position position="863"/>
    </location>
</feature>
<feature type="modified residue" description="Phosphoserine" evidence="3">
    <location>
        <position position="888"/>
    </location>
</feature>
<feature type="modified residue" description="Phosphoserine" evidence="3">
    <location>
        <position position="891"/>
    </location>
</feature>
<feature type="cross-link" description="Glycyl lysine isopeptide (Lys-Gly) (interchain with G-Cter in SUMO2)" evidence="3">
    <location>
        <position position="506"/>
    </location>
</feature>
<feature type="cross-link" description="Glycyl lysine isopeptide (Lys-Gly) (interchain with G-Cter in SUMO2)" evidence="3">
    <location>
        <position position="618"/>
    </location>
</feature>
<feature type="cross-link" description="Glycyl lysine isopeptide (Lys-Gly) (interchain with G-Cter in SUMO2)" evidence="3">
    <location>
        <position position="657"/>
    </location>
</feature>
<feature type="cross-link" description="Glycyl lysine isopeptide (Lys-Gly) (interchain with G-Cter in SUMO2)" evidence="3">
    <location>
        <position position="813"/>
    </location>
</feature>
<feature type="cross-link" description="Glycyl lysine isopeptide (Lys-Gly) (interchain with G-Cter in SUMO2)" evidence="3">
    <location>
        <position position="903"/>
    </location>
</feature>
<feature type="splice variant" id="VSP_029456" description="In isoform 2." evidence="7">
    <original>GNCTWGMSCRFIHPGVNDKGNYSLITKAEPFPPNGAPPLGPHPLMPANPWGGPVVDEILPPPPPEPPTESAWERGLRHAKEVLKKATIRKEQ</original>
    <variation>DVVTPLSTLLPPIPNSIPLRGQVKGTKYPVFTLCCALKSPAPEARLLSPGSRAQLGRQQGGGLRDRTAVALFSLVSLELGRRCRLRPWHCT</variation>
    <location>
        <begin position="226"/>
        <end position="317"/>
    </location>
</feature>
<feature type="splice variant" id="VSP_029457" description="In isoform 2." evidence="7">
    <location>
        <begin position="318"/>
        <end position="948"/>
    </location>
</feature>
<feature type="modified residue" description="Omega-N-methylarginine" evidence="14">
    <location sequence="Q0P678-2">
        <position position="245"/>
    </location>
</feature>
<gene>
    <name type="primary">Zc3h18</name>
    <name type="synonym">Nhn1</name>
</gene>
<protein>
    <recommendedName>
        <fullName>Zinc finger CCCH domain-containing protein 18</fullName>
    </recommendedName>
    <alternativeName>
        <fullName>Nuclear protein NHN1</fullName>
    </alternativeName>
</protein>
<sequence length="948" mass="105694">MDVAESPELDPHSPEDEEQPALSDDDILRESGSEQDLDGAGERASDLEEEENATRVQSQEETRSDEEDRASEPKSQDQDSEAHELSRGPAGSPCEEGDDVEEDGTSDLRDEASSVTRELDEHELDYDEEVPEEPAPAAQEEEAEKAGAEEEEEKGEGAPGEEGKPDVQSVGEQEPTEAAKEKKKEDDDGEIDDGEIDDDDLEEGEVKDPSDRKVRPRPTCRFFMKGNCTWGMSCRFIHPGVNDKGNYSLITKAEPFPPNGAPPLGPHPLMPANPWGGPVVDEILPPPPPEPPTESAWERGLRHAKEVLKKATIRKEQEPDFEEKRFTVTIGEDDREFDKENEVFRDWNSRVPRDVRDTTLEPYADPYYDYEIERFWRGGQYENFRVQYTEAEPYHNYRERERERERENRQRERERERERDRERERRQRERERERERERDKERQRRKEEWERERAKRDEKDRQHRDRDRDKDREKDKEKPKPRSPQPPSRQAEPPKKESTSVGPQVKRADEWKDPWRRSKSPKKKLGVSVSPSRARRRRKTSASSASASNSSRSSSRSSSYSGSGSSRSRSRSSSYSSYSSRSSRHSSFSGSRSRSRSFSSSPSPSPTPSPHRPPVRTKGEPAPPPGKAGEKSIKKPAPPPAPPQATKTTAPGPEPAKPGDLREARRKERQTRTPPRRRTLSGSGSGSGSSYSGSSSRSRSLSVSSVSSVSSATSSSSSVHSVDSDDMYADLASPVSSASSRSPTPAQTKKERGKSKKEDGVREEKRRRDPSAQPPKSSKAPAGGKASQQAAAPQPAVPGQPQQGSFVAHKEIKLTLLNKAADKGSRKRYEPSDKDRQSPPAKKANLSPDRGSRDRKSGGRMGSPKPERQRGQNAKAPAAPADRKRPLSPQSKGSSKVTSVPGKATDTATAGTKSGKASTLSRREELLKQLKAVEDAIARKRAKIPGKV</sequence>
<name>ZCH18_MOUSE</name>
<evidence type="ECO:0000250" key="1"/>
<evidence type="ECO:0000250" key="2">
    <source>
        <dbReference type="UniProtKB" id="Q6TQE1"/>
    </source>
</evidence>
<evidence type="ECO:0000250" key="3">
    <source>
        <dbReference type="UniProtKB" id="Q86VM9"/>
    </source>
</evidence>
<evidence type="ECO:0000255" key="4"/>
<evidence type="ECO:0000255" key="5">
    <source>
        <dbReference type="PROSITE-ProRule" id="PRU00723"/>
    </source>
</evidence>
<evidence type="ECO:0000256" key="6">
    <source>
        <dbReference type="SAM" id="MobiDB-lite"/>
    </source>
</evidence>
<evidence type="ECO:0000303" key="7">
    <source>
    </source>
</evidence>
<evidence type="ECO:0000305" key="8"/>
<evidence type="ECO:0007744" key="9">
    <source>
    </source>
</evidence>
<evidence type="ECO:0007744" key="10">
    <source>
    </source>
</evidence>
<evidence type="ECO:0007744" key="11">
    <source>
    </source>
</evidence>
<evidence type="ECO:0007744" key="12">
    <source>
    </source>
</evidence>
<evidence type="ECO:0007744" key="13">
    <source>
    </source>
</evidence>
<evidence type="ECO:0007744" key="14">
    <source>
    </source>
</evidence>
<dbReference type="EMBL" id="AK017933">
    <property type="protein sequence ID" value="BAB31010.3"/>
    <property type="molecule type" value="mRNA"/>
</dbReference>
<dbReference type="EMBL" id="AK166802">
    <property type="protein sequence ID" value="BAE39030.1"/>
    <property type="molecule type" value="mRNA"/>
</dbReference>
<dbReference type="EMBL" id="BC030495">
    <property type="protein sequence ID" value="AAH30495.1"/>
    <property type="molecule type" value="mRNA"/>
</dbReference>
<dbReference type="EMBL" id="BC094330">
    <property type="protein sequence ID" value="AAH94330.1"/>
    <property type="molecule type" value="mRNA"/>
</dbReference>
<dbReference type="EMBL" id="AK131189">
    <property type="protein sequence ID" value="BAD21439.1"/>
    <property type="status" value="ALT_INIT"/>
    <property type="molecule type" value="mRNA"/>
</dbReference>
<dbReference type="CCDS" id="CCDS22736.1">
    <molecule id="Q0P678-1"/>
</dbReference>
<dbReference type="RefSeq" id="NP_001025164.1">
    <property type="nucleotide sequence ID" value="NM_001029993.1"/>
</dbReference>
<dbReference type="RefSeq" id="NP_001025165.1">
    <molecule id="Q0P678-1"/>
    <property type="nucleotide sequence ID" value="NM_001029994.1"/>
</dbReference>
<dbReference type="RefSeq" id="NP_001297579.1">
    <property type="nucleotide sequence ID" value="NM_001310650.1"/>
</dbReference>
<dbReference type="BioGRID" id="217907">
    <property type="interactions" value="3"/>
</dbReference>
<dbReference type="FunCoup" id="Q0P678">
    <property type="interactions" value="2828"/>
</dbReference>
<dbReference type="IntAct" id="Q0P678">
    <property type="interactions" value="4"/>
</dbReference>
<dbReference type="MINT" id="Q0P678"/>
<dbReference type="STRING" id="10090.ENSMUSP00000017622"/>
<dbReference type="GlyGen" id="Q0P678">
    <property type="glycosylation" value="7 sites, 2 N-linked glycans (3 sites), 1 O-linked glycan (2 sites)"/>
</dbReference>
<dbReference type="iPTMnet" id="Q0P678"/>
<dbReference type="PhosphoSitePlus" id="Q0P678"/>
<dbReference type="jPOST" id="Q0P678"/>
<dbReference type="PaxDb" id="10090-ENSMUSP00000017622"/>
<dbReference type="PeptideAtlas" id="Q0P678"/>
<dbReference type="ProteomicsDB" id="298507">
    <molecule id="Q0P678-1"/>
</dbReference>
<dbReference type="ProteomicsDB" id="298508">
    <molecule id="Q0P678-2"/>
</dbReference>
<dbReference type="Pumba" id="Q0P678"/>
<dbReference type="Antibodypedia" id="30727">
    <property type="antibodies" value="26 antibodies from 12 providers"/>
</dbReference>
<dbReference type="DNASU" id="76014"/>
<dbReference type="Ensembl" id="ENSMUST00000093073.12">
    <molecule id="Q0P678-1"/>
    <property type="protein sequence ID" value="ENSMUSP00000090761.6"/>
    <property type="gene ID" value="ENSMUSG00000017478.16"/>
</dbReference>
<dbReference type="GeneID" id="76014"/>
<dbReference type="KEGG" id="mmu:76014"/>
<dbReference type="UCSC" id="uc009nsl.1">
    <molecule id="Q0P678-2"/>
    <property type="organism name" value="mouse"/>
</dbReference>
<dbReference type="UCSC" id="uc009nsn.1">
    <molecule id="Q0P678-1"/>
    <property type="organism name" value="mouse"/>
</dbReference>
<dbReference type="AGR" id="MGI:1923264"/>
<dbReference type="CTD" id="124245"/>
<dbReference type="MGI" id="MGI:1923264">
    <property type="gene designation" value="Zc3h18"/>
</dbReference>
<dbReference type="VEuPathDB" id="HostDB:ENSMUSG00000017478"/>
<dbReference type="eggNOG" id="ENOG502R7WP">
    <property type="taxonomic scope" value="Eukaryota"/>
</dbReference>
<dbReference type="GeneTree" id="ENSGT00730000111190"/>
<dbReference type="HOGENOM" id="CLU_012901_0_0_1"/>
<dbReference type="InParanoid" id="Q0P678"/>
<dbReference type="OrthoDB" id="10072532at2759"/>
<dbReference type="PhylomeDB" id="Q0P678"/>
<dbReference type="BioGRID-ORCS" id="76014">
    <property type="hits" value="18 hits in 76 CRISPR screens"/>
</dbReference>
<dbReference type="ChiTaRS" id="Zc3h18">
    <property type="organism name" value="mouse"/>
</dbReference>
<dbReference type="PRO" id="PR:Q0P678"/>
<dbReference type="Proteomes" id="UP000000589">
    <property type="component" value="Chromosome 8"/>
</dbReference>
<dbReference type="RNAct" id="Q0P678">
    <property type="molecule type" value="protein"/>
</dbReference>
<dbReference type="Bgee" id="ENSMUSG00000017478">
    <property type="expression patterns" value="Expressed in cranial cartilage and 115 other cell types or tissues"/>
</dbReference>
<dbReference type="ExpressionAtlas" id="Q0P678">
    <property type="expression patterns" value="baseline and differential"/>
</dbReference>
<dbReference type="GO" id="GO:0005634">
    <property type="term" value="C:nucleus"/>
    <property type="evidence" value="ECO:0007669"/>
    <property type="project" value="UniProtKB-SubCell"/>
</dbReference>
<dbReference type="GO" id="GO:0008270">
    <property type="term" value="F:zinc ion binding"/>
    <property type="evidence" value="ECO:0007669"/>
    <property type="project" value="UniProtKB-KW"/>
</dbReference>
<dbReference type="Gene3D" id="4.10.1000.10">
    <property type="entry name" value="Zinc finger, CCCH-type"/>
    <property type="match status" value="1"/>
</dbReference>
<dbReference type="InterPro" id="IPR052647">
    <property type="entry name" value="Zinc_finger_CCCH-type"/>
</dbReference>
<dbReference type="InterPro" id="IPR041367">
    <property type="entry name" value="Znf-CCCH_4"/>
</dbReference>
<dbReference type="InterPro" id="IPR000571">
    <property type="entry name" value="Znf_CCCH"/>
</dbReference>
<dbReference type="InterPro" id="IPR036855">
    <property type="entry name" value="Znf_CCCH_sf"/>
</dbReference>
<dbReference type="PANTHER" id="PTHR46582">
    <property type="entry name" value="ZINC FINGER CCCH DOMAIN-CONTAINING PROTEIN 18"/>
    <property type="match status" value="1"/>
</dbReference>
<dbReference type="PANTHER" id="PTHR46582:SF1">
    <property type="entry name" value="ZINC FINGER CCCH DOMAIN-CONTAINING PROTEIN 18"/>
    <property type="match status" value="1"/>
</dbReference>
<dbReference type="Pfam" id="PF18044">
    <property type="entry name" value="zf-CCCH_4"/>
    <property type="match status" value="1"/>
</dbReference>
<dbReference type="SMART" id="SM00356">
    <property type="entry name" value="ZnF_C3H1"/>
    <property type="match status" value="1"/>
</dbReference>
<dbReference type="SUPFAM" id="SSF90229">
    <property type="entry name" value="CCCH zinc finger"/>
    <property type="match status" value="1"/>
</dbReference>
<dbReference type="PROSITE" id="PS50103">
    <property type="entry name" value="ZF_C3H1"/>
    <property type="match status" value="1"/>
</dbReference>
<proteinExistence type="evidence at protein level"/>
<keyword id="KW-0007">Acetylation</keyword>
<keyword id="KW-0025">Alternative splicing</keyword>
<keyword id="KW-0175">Coiled coil</keyword>
<keyword id="KW-1017">Isopeptide bond</keyword>
<keyword id="KW-0479">Metal-binding</keyword>
<keyword id="KW-0488">Methylation</keyword>
<keyword id="KW-0539">Nucleus</keyword>
<keyword id="KW-0597">Phosphoprotein</keyword>
<keyword id="KW-1185">Reference proteome</keyword>
<keyword id="KW-0832">Ubl conjugation</keyword>
<keyword id="KW-0862">Zinc</keyword>
<keyword id="KW-0863">Zinc-finger</keyword>
<comment type="subunit">
    <text evidence="3">Interacts with ZFC3H1 in a RNase-insensitive manner.</text>
</comment>
<comment type="subcellular location">
    <subcellularLocation>
        <location evidence="1">Nucleus</location>
    </subcellularLocation>
</comment>
<comment type="alternative products">
    <event type="alternative splicing"/>
    <isoform>
        <id>Q0P678-1</id>
        <name>1</name>
        <sequence type="displayed"/>
    </isoform>
    <isoform>
        <id>Q0P678-2</id>
        <name>2</name>
        <sequence type="described" ref="VSP_029456 VSP_029457"/>
    </isoform>
</comment>
<comment type="sequence caution" evidence="8">
    <conflict type="erroneous initiation">
        <sequence resource="EMBL-CDS" id="BAD21439"/>
    </conflict>
</comment>
<reference key="1">
    <citation type="journal article" date="2005" name="Science">
        <title>The transcriptional landscape of the mammalian genome.</title>
        <authorList>
            <person name="Carninci P."/>
            <person name="Kasukawa T."/>
            <person name="Katayama S."/>
            <person name="Gough J."/>
            <person name="Frith M.C."/>
            <person name="Maeda N."/>
            <person name="Oyama R."/>
            <person name="Ravasi T."/>
            <person name="Lenhard B."/>
            <person name="Wells C."/>
            <person name="Kodzius R."/>
            <person name="Shimokawa K."/>
            <person name="Bajic V.B."/>
            <person name="Brenner S.E."/>
            <person name="Batalov S."/>
            <person name="Forrest A.R."/>
            <person name="Zavolan M."/>
            <person name="Davis M.J."/>
            <person name="Wilming L.G."/>
            <person name="Aidinis V."/>
            <person name="Allen J.E."/>
            <person name="Ambesi-Impiombato A."/>
            <person name="Apweiler R."/>
            <person name="Aturaliya R.N."/>
            <person name="Bailey T.L."/>
            <person name="Bansal M."/>
            <person name="Baxter L."/>
            <person name="Beisel K.W."/>
            <person name="Bersano T."/>
            <person name="Bono H."/>
            <person name="Chalk A.M."/>
            <person name="Chiu K.P."/>
            <person name="Choudhary V."/>
            <person name="Christoffels A."/>
            <person name="Clutterbuck D.R."/>
            <person name="Crowe M.L."/>
            <person name="Dalla E."/>
            <person name="Dalrymple B.P."/>
            <person name="de Bono B."/>
            <person name="Della Gatta G."/>
            <person name="di Bernardo D."/>
            <person name="Down T."/>
            <person name="Engstrom P."/>
            <person name="Fagiolini M."/>
            <person name="Faulkner G."/>
            <person name="Fletcher C.F."/>
            <person name="Fukushima T."/>
            <person name="Furuno M."/>
            <person name="Futaki S."/>
            <person name="Gariboldi M."/>
            <person name="Georgii-Hemming P."/>
            <person name="Gingeras T.R."/>
            <person name="Gojobori T."/>
            <person name="Green R.E."/>
            <person name="Gustincich S."/>
            <person name="Harbers M."/>
            <person name="Hayashi Y."/>
            <person name="Hensch T.K."/>
            <person name="Hirokawa N."/>
            <person name="Hill D."/>
            <person name="Huminiecki L."/>
            <person name="Iacono M."/>
            <person name="Ikeo K."/>
            <person name="Iwama A."/>
            <person name="Ishikawa T."/>
            <person name="Jakt M."/>
            <person name="Kanapin A."/>
            <person name="Katoh M."/>
            <person name="Kawasawa Y."/>
            <person name="Kelso J."/>
            <person name="Kitamura H."/>
            <person name="Kitano H."/>
            <person name="Kollias G."/>
            <person name="Krishnan S.P."/>
            <person name="Kruger A."/>
            <person name="Kummerfeld S.K."/>
            <person name="Kurochkin I.V."/>
            <person name="Lareau L.F."/>
            <person name="Lazarevic D."/>
            <person name="Lipovich L."/>
            <person name="Liu J."/>
            <person name="Liuni S."/>
            <person name="McWilliam S."/>
            <person name="Madan Babu M."/>
            <person name="Madera M."/>
            <person name="Marchionni L."/>
            <person name="Matsuda H."/>
            <person name="Matsuzawa S."/>
            <person name="Miki H."/>
            <person name="Mignone F."/>
            <person name="Miyake S."/>
            <person name="Morris K."/>
            <person name="Mottagui-Tabar S."/>
            <person name="Mulder N."/>
            <person name="Nakano N."/>
            <person name="Nakauchi H."/>
            <person name="Ng P."/>
            <person name="Nilsson R."/>
            <person name="Nishiguchi S."/>
            <person name="Nishikawa S."/>
            <person name="Nori F."/>
            <person name="Ohara O."/>
            <person name="Okazaki Y."/>
            <person name="Orlando V."/>
            <person name="Pang K.C."/>
            <person name="Pavan W.J."/>
            <person name="Pavesi G."/>
            <person name="Pesole G."/>
            <person name="Petrovsky N."/>
            <person name="Piazza S."/>
            <person name="Reed J."/>
            <person name="Reid J.F."/>
            <person name="Ring B.Z."/>
            <person name="Ringwald M."/>
            <person name="Rost B."/>
            <person name="Ruan Y."/>
            <person name="Salzberg S.L."/>
            <person name="Sandelin A."/>
            <person name="Schneider C."/>
            <person name="Schoenbach C."/>
            <person name="Sekiguchi K."/>
            <person name="Semple C.A."/>
            <person name="Seno S."/>
            <person name="Sessa L."/>
            <person name="Sheng Y."/>
            <person name="Shibata Y."/>
            <person name="Shimada H."/>
            <person name="Shimada K."/>
            <person name="Silva D."/>
            <person name="Sinclair B."/>
            <person name="Sperling S."/>
            <person name="Stupka E."/>
            <person name="Sugiura K."/>
            <person name="Sultana R."/>
            <person name="Takenaka Y."/>
            <person name="Taki K."/>
            <person name="Tammoja K."/>
            <person name="Tan S.L."/>
            <person name="Tang S."/>
            <person name="Taylor M.S."/>
            <person name="Tegner J."/>
            <person name="Teichmann S.A."/>
            <person name="Ueda H.R."/>
            <person name="van Nimwegen E."/>
            <person name="Verardo R."/>
            <person name="Wei C.L."/>
            <person name="Yagi K."/>
            <person name="Yamanishi H."/>
            <person name="Zabarovsky E."/>
            <person name="Zhu S."/>
            <person name="Zimmer A."/>
            <person name="Hide W."/>
            <person name="Bult C."/>
            <person name="Grimmond S.M."/>
            <person name="Teasdale R.D."/>
            <person name="Liu E.T."/>
            <person name="Brusic V."/>
            <person name="Quackenbush J."/>
            <person name="Wahlestedt C."/>
            <person name="Mattick J.S."/>
            <person name="Hume D.A."/>
            <person name="Kai C."/>
            <person name="Sasaki D."/>
            <person name="Tomaru Y."/>
            <person name="Fukuda S."/>
            <person name="Kanamori-Katayama M."/>
            <person name="Suzuki M."/>
            <person name="Aoki J."/>
            <person name="Arakawa T."/>
            <person name="Iida J."/>
            <person name="Imamura K."/>
            <person name="Itoh M."/>
            <person name="Kato T."/>
            <person name="Kawaji H."/>
            <person name="Kawagashira N."/>
            <person name="Kawashima T."/>
            <person name="Kojima M."/>
            <person name="Kondo S."/>
            <person name="Konno H."/>
            <person name="Nakano K."/>
            <person name="Ninomiya N."/>
            <person name="Nishio T."/>
            <person name="Okada M."/>
            <person name="Plessy C."/>
            <person name="Shibata K."/>
            <person name="Shiraki T."/>
            <person name="Suzuki S."/>
            <person name="Tagami M."/>
            <person name="Waki K."/>
            <person name="Watahiki A."/>
            <person name="Okamura-Oho Y."/>
            <person name="Suzuki H."/>
            <person name="Kawai J."/>
            <person name="Hayashizaki Y."/>
        </authorList>
    </citation>
    <scope>NUCLEOTIDE SEQUENCE [LARGE SCALE MRNA] (ISOFORM 2)</scope>
    <source>
        <strain>C57BL/6J</strain>
        <tissue>Thymus</tissue>
    </source>
</reference>
<reference key="2">
    <citation type="journal article" date="2004" name="Genome Res.">
        <title>The status, quality, and expansion of the NIH full-length cDNA project: the Mammalian Gene Collection (MGC).</title>
        <authorList>
            <consortium name="The MGC Project Team"/>
        </authorList>
    </citation>
    <scope>NUCLEOTIDE SEQUENCE [LARGE SCALE MRNA] (ISOFORM 1)</scope>
    <source>
        <strain>C57BL/6J</strain>
        <tissue>Brain</tissue>
        <tissue>Eye</tissue>
    </source>
</reference>
<reference key="3">
    <citation type="journal article" date="2004" name="DNA Res.">
        <title>Prediction of the coding sequences of mouse homologues of FLJ genes: the complete nucleotide sequences of 110 mouse FLJ-homologous cDNAs identified by screening of terminal sequences of cDNA clones randomly sampled from size-fractionated libraries.</title>
        <authorList>
            <person name="Okazaki N."/>
            <person name="Kikuno R."/>
            <person name="Ohara R."/>
            <person name="Inamoto S."/>
            <person name="Koseki H."/>
            <person name="Hiraoka S."/>
            <person name="Saga Y."/>
            <person name="Kitamura H."/>
            <person name="Nakagawa T."/>
            <person name="Nagase T."/>
            <person name="Ohara O."/>
            <person name="Koga H."/>
        </authorList>
    </citation>
    <scope>NUCLEOTIDE SEQUENCE [LARGE SCALE MRNA] OF 225-948 (ISOFORM 1)</scope>
    <source>
        <tissue>Spleen</tissue>
    </source>
</reference>
<reference key="4">
    <citation type="journal article" date="2007" name="Proc. Natl. Acad. Sci. U.S.A.">
        <title>Large-scale phosphorylation analysis of mouse liver.</title>
        <authorList>
            <person name="Villen J."/>
            <person name="Beausoleil S.A."/>
            <person name="Gerber S.A."/>
            <person name="Gygi S.P."/>
        </authorList>
    </citation>
    <scope>PHOSPHORYLATION [LARGE SCALE ANALYSIS] AT SER-45; SER-92 AND SER-530</scope>
    <scope>IDENTIFICATION BY MASS SPECTROMETRY [LARGE SCALE ANALYSIS]</scope>
    <source>
        <tissue>Liver</tissue>
    </source>
</reference>
<reference key="5">
    <citation type="journal article" date="2009" name="Immunity">
        <title>The phagosomal proteome in interferon-gamma-activated macrophages.</title>
        <authorList>
            <person name="Trost M."/>
            <person name="English L."/>
            <person name="Lemieux S."/>
            <person name="Courcelles M."/>
            <person name="Desjardins M."/>
            <person name="Thibault P."/>
        </authorList>
    </citation>
    <scope>PHOSPHORYLATION [LARGE SCALE ANALYSIS] AT SER-530; SER-847 AND SER-863</scope>
    <scope>IDENTIFICATION BY MASS SPECTROMETRY [LARGE SCALE ANALYSIS]</scope>
</reference>
<reference key="6">
    <citation type="journal article" date="2009" name="Mol. Cell. Proteomics">
        <title>Large scale localization of protein phosphorylation by use of electron capture dissociation mass spectrometry.</title>
        <authorList>
            <person name="Sweet S.M."/>
            <person name="Bailey C.M."/>
            <person name="Cunningham D.L."/>
            <person name="Heath J.K."/>
            <person name="Cooper H.J."/>
        </authorList>
    </citation>
    <scope>PHOSPHORYLATION [LARGE SCALE ANALYSIS] AT SER-530</scope>
    <scope>IDENTIFICATION BY MASS SPECTROMETRY [LARGE SCALE ANALYSIS]</scope>
    <source>
        <tissue>Embryonic fibroblast</tissue>
    </source>
</reference>
<reference key="7">
    <citation type="journal article" date="2010" name="Cell">
        <title>A tissue-specific atlas of mouse protein phosphorylation and expression.</title>
        <authorList>
            <person name="Huttlin E.L."/>
            <person name="Jedrychowski M.P."/>
            <person name="Elias J.E."/>
            <person name="Goswami T."/>
            <person name="Rad R."/>
            <person name="Beausoleil S.A."/>
            <person name="Villen J."/>
            <person name="Haas W."/>
            <person name="Sowa M.E."/>
            <person name="Gygi S.P."/>
        </authorList>
    </citation>
    <scope>PHOSPHORYLATION [LARGE SCALE ANALYSIS] AT SER-45; SER-92; THR-105; SER-106; SER-114 AND SER-530</scope>
    <scope>IDENTIFICATION BY MASS SPECTROMETRY [LARGE SCALE ANALYSIS]</scope>
    <source>
        <tissue>Brain</tissue>
        <tissue>Brown adipose tissue</tissue>
        <tissue>Heart</tissue>
        <tissue>Kidney</tissue>
        <tissue>Liver</tissue>
        <tissue>Lung</tissue>
        <tissue>Pancreas</tissue>
        <tissue>Spleen</tissue>
        <tissue>Testis</tissue>
    </source>
</reference>
<reference key="8">
    <citation type="journal article" date="2013" name="Mol. Cell">
        <title>SIRT5-mediated lysine desuccinylation impacts diverse metabolic pathways.</title>
        <authorList>
            <person name="Park J."/>
            <person name="Chen Y."/>
            <person name="Tishkoff D.X."/>
            <person name="Peng C."/>
            <person name="Tan M."/>
            <person name="Dai L."/>
            <person name="Xie Z."/>
            <person name="Zhang Y."/>
            <person name="Zwaans B.M."/>
            <person name="Skinner M.E."/>
            <person name="Lombard D.B."/>
            <person name="Zhao Y."/>
        </authorList>
    </citation>
    <scope>ACETYLATION [LARGE SCALE ANALYSIS] AT LYS-810</scope>
    <scope>IDENTIFICATION BY MASS SPECTROMETRY [LARGE SCALE ANALYSIS]</scope>
    <source>
        <tissue>Embryonic fibroblast</tissue>
    </source>
</reference>
<reference key="9">
    <citation type="journal article" date="2014" name="Mol. Cell. Proteomics">
        <title>Immunoaffinity enrichment and mass spectrometry analysis of protein methylation.</title>
        <authorList>
            <person name="Guo A."/>
            <person name="Gu H."/>
            <person name="Zhou J."/>
            <person name="Mulhern D."/>
            <person name="Wang Y."/>
            <person name="Lee K.A."/>
            <person name="Yang V."/>
            <person name="Aguiar M."/>
            <person name="Kornhauser J."/>
            <person name="Jia X."/>
            <person name="Ren J."/>
            <person name="Beausoleil S.A."/>
            <person name="Silva J.C."/>
            <person name="Vemulapalli V."/>
            <person name="Bedford M.T."/>
            <person name="Comb M.J."/>
        </authorList>
    </citation>
    <scope>METHYLATION [LARGE SCALE ANALYSIS] AT ARG-245 (ISOFORM 2)</scope>
    <scope>IDENTIFICATION BY MASS SPECTROMETRY [LARGE SCALE ANALYSIS]</scope>
    <source>
        <tissue>Embryo</tissue>
    </source>
</reference>
<accession>Q0P678</accession>
<accession>Q3TKW3</accession>
<accession>Q52KI3</accession>
<accession>Q6KAL8</accession>
<accession>Q9CU64</accession>
<organism>
    <name type="scientific">Mus musculus</name>
    <name type="common">Mouse</name>
    <dbReference type="NCBI Taxonomy" id="10090"/>
    <lineage>
        <taxon>Eukaryota</taxon>
        <taxon>Metazoa</taxon>
        <taxon>Chordata</taxon>
        <taxon>Craniata</taxon>
        <taxon>Vertebrata</taxon>
        <taxon>Euteleostomi</taxon>
        <taxon>Mammalia</taxon>
        <taxon>Eutheria</taxon>
        <taxon>Euarchontoglires</taxon>
        <taxon>Glires</taxon>
        <taxon>Rodentia</taxon>
        <taxon>Myomorpha</taxon>
        <taxon>Muroidea</taxon>
        <taxon>Muridae</taxon>
        <taxon>Murinae</taxon>
        <taxon>Mus</taxon>
        <taxon>Mus</taxon>
    </lineage>
</organism>